<protein>
    <recommendedName>
        <fullName evidence="6">Putative aminodehydroquinate synthase</fullName>
        <shortName evidence="3">aDHQS</shortName>
        <ecNumber evidence="6">4.2.3.-</ecNumber>
    </recommendedName>
</protein>
<accession>G0FS62</accession>
<accession>O52549</accession>
<evidence type="ECO:0000250" key="1">
    <source>
        <dbReference type="UniProtKB" id="Q3M6C3"/>
    </source>
</evidence>
<evidence type="ECO:0000269" key="2">
    <source>
    </source>
</evidence>
<evidence type="ECO:0000303" key="3">
    <source>
    </source>
</evidence>
<evidence type="ECO:0000303" key="4">
    <source>
    </source>
</evidence>
<evidence type="ECO:0000305" key="5"/>
<evidence type="ECO:0000305" key="6">
    <source>
    </source>
</evidence>
<evidence type="ECO:0000312" key="7">
    <source>
        <dbReference type="EMBL" id="AEK39130.1"/>
    </source>
</evidence>
<gene>
    <name evidence="4" type="primary">rifG</name>
    <name evidence="7" type="ordered locus">RAM_03190</name>
</gene>
<name>RIFG_AMYMS</name>
<reference key="1">
    <citation type="journal article" date="1998" name="Chem. Biol.">
        <title>Biosynthesis of the ansamycin antibiotic rifamycin: deductions from the molecular analysis of the rif biosynthetic gene cluster of Amycolatopsis mediterranei S699.</title>
        <authorList>
            <person name="August P.R."/>
            <person name="Tang L."/>
            <person name="Yoon Y.J."/>
            <person name="Ning S."/>
            <person name="Mueller R."/>
            <person name="Yu T.W."/>
            <person name="Taylor M."/>
            <person name="Hoffmann D."/>
            <person name="Kim C.G."/>
            <person name="Zhang X."/>
            <person name="Hutchinson C.R."/>
            <person name="Floss H.G."/>
        </authorList>
    </citation>
    <scope>NUCLEOTIDE SEQUENCE [GENOMIC DNA]</scope>
    <source>
        <strain>S699</strain>
    </source>
</reference>
<reference key="2">
    <citation type="journal article" date="2011" name="J. Bacteriol.">
        <title>Whole genome sequence of the rifamycin B-producing strain Amycolatopsis mediterranei S699.</title>
        <authorList>
            <person name="Verma M."/>
            <person name="Kaur J."/>
            <person name="Kumar M."/>
            <person name="Kumari K."/>
            <person name="Saxena A."/>
            <person name="Anand S."/>
            <person name="Nigam A."/>
            <person name="Ravi V."/>
            <person name="Raghuvanshi S."/>
            <person name="Khurana P."/>
            <person name="Tyagi A.K."/>
            <person name="Khurana J.P."/>
            <person name="Lal R."/>
        </authorList>
    </citation>
    <scope>NUCLEOTIDE SEQUENCE [LARGE SCALE GENOMIC DNA]</scope>
    <source>
        <strain>S699</strain>
    </source>
</reference>
<reference key="3">
    <citation type="journal article" date="2001" name="J. Biol. Chem.">
        <title>Mutational analysis and reconstituted expression of the biosynthetic genes involved in the formation of 3-amino-5-hydroxybenzoic acid, the starter unit of rifamycin biosynthesis in amycolatopsis Mediterranei S699.</title>
        <authorList>
            <person name="Yu T.W."/>
            <person name="Muller R."/>
            <person name="Muller M."/>
            <person name="Zhang X."/>
            <person name="Draeger G."/>
            <person name="Kim C.G."/>
            <person name="Leistner E."/>
            <person name="Floss H.G."/>
        </authorList>
    </citation>
    <scope>FUNCTION</scope>
    <scope>DISRUPTION PHENOTYPE</scope>
    <source>
        <strain>S699</strain>
    </source>
</reference>
<proteinExistence type="inferred from homology"/>
<feature type="chain" id="PRO_0000441287" description="Putative aminodehydroquinate synthase">
    <location>
        <begin position="1"/>
        <end position="351"/>
    </location>
</feature>
<feature type="binding site" evidence="1">
    <location>
        <begin position="65"/>
        <end position="68"/>
    </location>
    <ligand>
        <name>NAD(+)</name>
        <dbReference type="ChEBI" id="CHEBI:57540"/>
    </ligand>
</feature>
<feature type="binding site" evidence="1">
    <location>
        <begin position="97"/>
        <end position="101"/>
    </location>
    <ligand>
        <name>NAD(+)</name>
        <dbReference type="ChEBI" id="CHEBI:57540"/>
    </ligand>
</feature>
<feature type="binding site" evidence="1">
    <location>
        <begin position="121"/>
        <end position="122"/>
    </location>
    <ligand>
        <name>NAD(+)</name>
        <dbReference type="ChEBI" id="CHEBI:57540"/>
    </ligand>
</feature>
<feature type="binding site" evidence="1">
    <location>
        <position position="134"/>
    </location>
    <ligand>
        <name>NAD(+)</name>
        <dbReference type="ChEBI" id="CHEBI:57540"/>
    </ligand>
</feature>
<feature type="binding site" evidence="1">
    <location>
        <position position="143"/>
    </location>
    <ligand>
        <name>NAD(+)</name>
        <dbReference type="ChEBI" id="CHEBI:57540"/>
    </ligand>
</feature>
<feature type="binding site" evidence="1">
    <location>
        <begin position="161"/>
        <end position="164"/>
    </location>
    <ligand>
        <name>NAD(+)</name>
        <dbReference type="ChEBI" id="CHEBI:57540"/>
    </ligand>
</feature>
<feature type="binding site" evidence="1">
    <location>
        <position position="176"/>
    </location>
    <ligand>
        <name>Zn(2+)</name>
        <dbReference type="ChEBI" id="CHEBI:29105"/>
    </ligand>
</feature>
<feature type="binding site" evidence="1">
    <location>
        <position position="225"/>
    </location>
    <ligand>
        <name>Zn(2+)</name>
        <dbReference type="ChEBI" id="CHEBI:29105"/>
    </ligand>
</feature>
<feature type="binding site" evidence="1">
    <location>
        <position position="241"/>
    </location>
    <ligand>
        <name>Zn(2+)</name>
        <dbReference type="ChEBI" id="CHEBI:29105"/>
    </ligand>
</feature>
<feature type="sequence conflict" description="In Ref. 1; AAC01717." evidence="5" ref="1">
    <original>K</original>
    <variation>E</variation>
    <location>
        <position position="143"/>
    </location>
</feature>
<sequence>MRTTIPVRLAERSYDVLVGPGVRAALPEVVRRLGARRAVVVSARPADWVPGTGVETLLLQARDGEPTKRLSTVEELCGEFARFGLTRSDVVVSCGGGTTTDVVGLAAALYHRGVAVVHLPTSLLAQVDASVGGKTAVNLPAGKNLVGAYWQPSAVLCDTDYLTTLPRREVLNGLGEIARCHFIGAPDLRGRSRPEQIAASVTLKAGIVAQDERDTGPRHLLNYGHTLGHALEIATGFALRHGEAVAIGTVFAGRLAGALGRLDQSGVDEHLAVVRHYGLPAALPADVDPAVLVRQMYRDKKAITGLAFVLAGPRGAELVSDVPAPVVTDVLDRMPRDSLENLVGTTEAAAP</sequence>
<keyword id="KW-0028">Amino-acid biosynthesis</keyword>
<keyword id="KW-0057">Aromatic amino acid biosynthesis</keyword>
<keyword id="KW-0170">Cobalt</keyword>
<keyword id="KW-0456">Lyase</keyword>
<keyword id="KW-0479">Metal-binding</keyword>
<keyword id="KW-0520">NAD</keyword>
<keyword id="KW-0862">Zinc</keyword>
<organism>
    <name type="scientific">Amycolatopsis mediterranei (strain S699)</name>
    <name type="common">Nocardia mediterranei</name>
    <dbReference type="NCBI Taxonomy" id="713604"/>
    <lineage>
        <taxon>Bacteria</taxon>
        <taxon>Bacillati</taxon>
        <taxon>Actinomycetota</taxon>
        <taxon>Actinomycetes</taxon>
        <taxon>Pseudonocardiales</taxon>
        <taxon>Pseudonocardiaceae</taxon>
        <taxon>Amycolatopsis</taxon>
    </lineage>
</organism>
<comment type="function">
    <text evidence="6">May catalyze the conversion of 3,4-dideoxy-4-amino-D-arabino-heptulosonate 7-phosphate (aDAHP) to 5-deoxy-5-amino-3-dehydroquinate (aDHQ). Probably involved in the formation of 3-amino-5-hydroxybenzoic acid (AHBA), the precursor of rifamycin and related ansamycins.</text>
</comment>
<comment type="cofactor">
    <cofactor evidence="1">
        <name>NAD(+)</name>
        <dbReference type="ChEBI" id="CHEBI:57540"/>
    </cofactor>
</comment>
<comment type="cofactor">
    <cofactor evidence="1">
        <name>Co(2+)</name>
        <dbReference type="ChEBI" id="CHEBI:48828"/>
    </cofactor>
    <cofactor evidence="1">
        <name>Zn(2+)</name>
        <dbReference type="ChEBI" id="CHEBI:29105"/>
    </cofactor>
</comment>
<comment type="disruption phenotype">
    <text evidence="2">Inactivation of the gene does not affect rifamycin production significantly.</text>
</comment>
<comment type="similarity">
    <text evidence="5">Belongs to the sugar phosphate cyclases superfamily. aDHQS family.</text>
</comment>
<dbReference type="EC" id="4.2.3.-" evidence="6"/>
<dbReference type="EMBL" id="AF040570">
    <property type="protein sequence ID" value="AAC01717.1"/>
    <property type="molecule type" value="Genomic_DNA"/>
</dbReference>
<dbReference type="EMBL" id="CP002896">
    <property type="protein sequence ID" value="AEK39130.1"/>
    <property type="molecule type" value="Genomic_DNA"/>
</dbReference>
<dbReference type="RefSeq" id="WP_013222554.1">
    <property type="nucleotide sequence ID" value="NC_018266.1"/>
</dbReference>
<dbReference type="SMR" id="G0FS62"/>
<dbReference type="STRING" id="713604.RAM_03190"/>
<dbReference type="GeneID" id="92868426"/>
<dbReference type="KEGG" id="amm:AMES_0622"/>
<dbReference type="KEGG" id="amn:RAM_03190"/>
<dbReference type="PATRIC" id="fig|713604.12.peg.663"/>
<dbReference type="BioCyc" id="MetaCyc:MONOMER-20728"/>
<dbReference type="Proteomes" id="UP000006138">
    <property type="component" value="Chromosome"/>
</dbReference>
<dbReference type="GO" id="GO:0003856">
    <property type="term" value="F:3-dehydroquinate synthase activity"/>
    <property type="evidence" value="ECO:0007669"/>
    <property type="project" value="TreeGrafter"/>
</dbReference>
<dbReference type="GO" id="GO:0046872">
    <property type="term" value="F:metal ion binding"/>
    <property type="evidence" value="ECO:0007669"/>
    <property type="project" value="UniProtKB-KW"/>
</dbReference>
<dbReference type="GO" id="GO:0008652">
    <property type="term" value="P:amino acid biosynthetic process"/>
    <property type="evidence" value="ECO:0007669"/>
    <property type="project" value="UniProtKB-KW"/>
</dbReference>
<dbReference type="GO" id="GO:0009073">
    <property type="term" value="P:aromatic amino acid family biosynthetic process"/>
    <property type="evidence" value="ECO:0007669"/>
    <property type="project" value="UniProtKB-KW"/>
</dbReference>
<dbReference type="CDD" id="cd08195">
    <property type="entry name" value="DHQS"/>
    <property type="match status" value="1"/>
</dbReference>
<dbReference type="Gene3D" id="3.40.50.1970">
    <property type="match status" value="1"/>
</dbReference>
<dbReference type="Gene3D" id="1.20.1090.10">
    <property type="entry name" value="Dehydroquinate synthase-like - alpha domain"/>
    <property type="match status" value="1"/>
</dbReference>
<dbReference type="InterPro" id="IPR050071">
    <property type="entry name" value="Dehydroquinate_synthase"/>
</dbReference>
<dbReference type="InterPro" id="IPR030960">
    <property type="entry name" value="DHQS/DOIS_N"/>
</dbReference>
<dbReference type="InterPro" id="IPR056179">
    <property type="entry name" value="DHQS_C"/>
</dbReference>
<dbReference type="PANTHER" id="PTHR43622">
    <property type="entry name" value="3-DEHYDROQUINATE SYNTHASE"/>
    <property type="match status" value="1"/>
</dbReference>
<dbReference type="PANTHER" id="PTHR43622:SF7">
    <property type="entry name" value="3-DEHYDROQUINATE SYNTHASE, CHLOROPLASTIC"/>
    <property type="match status" value="1"/>
</dbReference>
<dbReference type="Pfam" id="PF01761">
    <property type="entry name" value="DHQ_synthase"/>
    <property type="match status" value="1"/>
</dbReference>
<dbReference type="Pfam" id="PF24621">
    <property type="entry name" value="DHQS_C"/>
    <property type="match status" value="1"/>
</dbReference>
<dbReference type="SUPFAM" id="SSF56796">
    <property type="entry name" value="Dehydroquinate synthase-like"/>
    <property type="match status" value="1"/>
</dbReference>